<protein>
    <recommendedName>
        <fullName evidence="1">tRNA 5-methylaminomethyl-2-thiouridine biosynthesis bifunctional protein MnmC</fullName>
        <shortName evidence="1">tRNA mnm(5)s(2)U biosynthesis bifunctional protein</shortName>
    </recommendedName>
    <domain>
        <recommendedName>
            <fullName evidence="1">tRNA (mnm(5)s(2)U34)-methyltransferase</fullName>
            <ecNumber evidence="1">2.1.1.61</ecNumber>
        </recommendedName>
    </domain>
    <domain>
        <recommendedName>
            <fullName evidence="1">FAD-dependent cmnm(5)s(2)U34 oxidoreductase</fullName>
            <ecNumber evidence="1">1.5.-.-</ecNumber>
        </recommendedName>
    </domain>
</protein>
<gene>
    <name evidence="1" type="primary">mnmC</name>
    <name type="ordered locus">Spro_3369</name>
</gene>
<name>MNMC_SERP5</name>
<reference key="1">
    <citation type="submission" date="2007-09" db="EMBL/GenBank/DDBJ databases">
        <title>Complete sequence of chromosome of Serratia proteamaculans 568.</title>
        <authorList>
            <consortium name="US DOE Joint Genome Institute"/>
            <person name="Copeland A."/>
            <person name="Lucas S."/>
            <person name="Lapidus A."/>
            <person name="Barry K."/>
            <person name="Glavina del Rio T."/>
            <person name="Dalin E."/>
            <person name="Tice H."/>
            <person name="Pitluck S."/>
            <person name="Chain P."/>
            <person name="Malfatti S."/>
            <person name="Shin M."/>
            <person name="Vergez L."/>
            <person name="Schmutz J."/>
            <person name="Larimer F."/>
            <person name="Land M."/>
            <person name="Hauser L."/>
            <person name="Kyrpides N."/>
            <person name="Kim E."/>
            <person name="Taghavi S."/>
            <person name="Newman L."/>
            <person name="Vangronsveld J."/>
            <person name="van der Lelie D."/>
            <person name="Richardson P."/>
        </authorList>
    </citation>
    <scope>NUCLEOTIDE SEQUENCE [LARGE SCALE GENOMIC DNA]</scope>
    <source>
        <strain>568</strain>
    </source>
</reference>
<proteinExistence type="inferred from homology"/>
<comment type="function">
    <text evidence="1">Catalyzes the last two steps in the biosynthesis of 5-methylaminomethyl-2-thiouridine (mnm(5)s(2)U) at the wobble position (U34) in tRNA. Catalyzes the FAD-dependent demodification of cmnm(5)s(2)U34 to nm(5)s(2)U34, followed by the transfer of a methyl group from S-adenosyl-L-methionine to nm(5)s(2)U34, to form mnm(5)s(2)U34.</text>
</comment>
<comment type="catalytic activity">
    <reaction evidence="1">
        <text>5-aminomethyl-2-thiouridine(34) in tRNA + S-adenosyl-L-methionine = 5-methylaminomethyl-2-thiouridine(34) in tRNA + S-adenosyl-L-homocysteine + H(+)</text>
        <dbReference type="Rhea" id="RHEA:19569"/>
        <dbReference type="Rhea" id="RHEA-COMP:10195"/>
        <dbReference type="Rhea" id="RHEA-COMP:10197"/>
        <dbReference type="ChEBI" id="CHEBI:15378"/>
        <dbReference type="ChEBI" id="CHEBI:57856"/>
        <dbReference type="ChEBI" id="CHEBI:59789"/>
        <dbReference type="ChEBI" id="CHEBI:74454"/>
        <dbReference type="ChEBI" id="CHEBI:74455"/>
        <dbReference type="EC" id="2.1.1.61"/>
    </reaction>
</comment>
<comment type="cofactor">
    <cofactor evidence="1">
        <name>FAD</name>
        <dbReference type="ChEBI" id="CHEBI:57692"/>
    </cofactor>
</comment>
<comment type="subcellular location">
    <subcellularLocation>
        <location evidence="1">Cytoplasm</location>
    </subcellularLocation>
</comment>
<comment type="similarity">
    <text evidence="1">In the N-terminal section; belongs to the methyltransferase superfamily. tRNA (mnm(5)s(2)U34)-methyltransferase family.</text>
</comment>
<comment type="similarity">
    <text evidence="1">In the C-terminal section; belongs to the DAO family.</text>
</comment>
<evidence type="ECO:0000255" key="1">
    <source>
        <dbReference type="HAMAP-Rule" id="MF_01102"/>
    </source>
</evidence>
<accession>A8GH77</accession>
<feature type="chain" id="PRO_1000065011" description="tRNA 5-methylaminomethyl-2-thiouridine biosynthesis bifunctional protein MnmC">
    <location>
        <begin position="1"/>
        <end position="673"/>
    </location>
</feature>
<feature type="region of interest" description="tRNA (mnm(5)s(2)U34)-methyltransferase">
    <location>
        <begin position="1"/>
        <end position="245"/>
    </location>
</feature>
<feature type="region of interest" description="FAD-dependent cmnm(5)s(2)U34 oxidoreductase">
    <location>
        <begin position="272"/>
        <end position="673"/>
    </location>
</feature>
<keyword id="KW-0963">Cytoplasm</keyword>
<keyword id="KW-0274">FAD</keyword>
<keyword id="KW-0285">Flavoprotein</keyword>
<keyword id="KW-0489">Methyltransferase</keyword>
<keyword id="KW-0511">Multifunctional enzyme</keyword>
<keyword id="KW-0560">Oxidoreductase</keyword>
<keyword id="KW-0949">S-adenosyl-L-methionine</keyword>
<keyword id="KW-0808">Transferase</keyword>
<keyword id="KW-0819">tRNA processing</keyword>
<organism>
    <name type="scientific">Serratia proteamaculans (strain 568)</name>
    <dbReference type="NCBI Taxonomy" id="399741"/>
    <lineage>
        <taxon>Bacteria</taxon>
        <taxon>Pseudomonadati</taxon>
        <taxon>Pseudomonadota</taxon>
        <taxon>Gammaproteobacteria</taxon>
        <taxon>Enterobacterales</taxon>
        <taxon>Yersiniaceae</taxon>
        <taxon>Serratia</taxon>
    </lineage>
</organism>
<sequence length="673" mass="73709">MSHAPIQTAALSWNEQGTPVSKQFDDVYFSNQDGLEETRYVFLKGNRLPSRFAEHPRPLFIVAETGFGTGLNFLTLWQAFADFHATTPDATLQRLHFISFEKFPLLQADLAAAHARWPELAPYADELRAQWPLPLPGCHRLLLAEGRITLDLWFGDVNELLPHFDASMHRQIDAWFLDGFAPSKNPDMWTEQLFAAMARFARPGGSLATFTAAGFVRRGLQQAGFEVIKSKGFGQKREMLIGELPADAPAVAHPTPWLLRPAADNTDDIAIIGGGVASALTALALLRRGAKVTLYCADPQAAEGASGNRQGALYPLLNGRGDALENFFSAAFLFARRQYDALLKQGVTFDHQWCGVSQLAYDEKSAGKIANMLAVEWPQQLAVAADRTTLSALCGIDSGFGGINYPQGGWLCPAELTRNAIALAQHQGLSCHYESDVKALTATDSGWQLSFNQEETRQHATVILANGHRLGELAPSEALPVYAVRGQVSHIPTTPALSELKQVLCYDGYLTPVNANNQQHCIGASYQRGETATEYREEEQQDNRARLLRCLPEQSWPAQVDVSGQHARCGVRSATRDHLPMIGAVPDYQATLTQYQHLQRQHQRGEAIANAPSYPNLFVIGALGSRGLCSAPLAAEILAAQLFGEPLPGDADMLAALNPNRMWVRKLLKGRAV</sequence>
<dbReference type="EC" id="2.1.1.61" evidence="1"/>
<dbReference type="EC" id="1.5.-.-" evidence="1"/>
<dbReference type="EMBL" id="CP000826">
    <property type="protein sequence ID" value="ABV42467.1"/>
    <property type="molecule type" value="Genomic_DNA"/>
</dbReference>
<dbReference type="SMR" id="A8GH77"/>
<dbReference type="STRING" id="399741.Spro_3369"/>
<dbReference type="KEGG" id="spe:Spro_3369"/>
<dbReference type="eggNOG" id="COG0665">
    <property type="taxonomic scope" value="Bacteria"/>
</dbReference>
<dbReference type="eggNOG" id="COG4121">
    <property type="taxonomic scope" value="Bacteria"/>
</dbReference>
<dbReference type="HOGENOM" id="CLU_022427_2_1_6"/>
<dbReference type="OrthoDB" id="9786494at2"/>
<dbReference type="GO" id="GO:0005737">
    <property type="term" value="C:cytoplasm"/>
    <property type="evidence" value="ECO:0007669"/>
    <property type="project" value="UniProtKB-SubCell"/>
</dbReference>
<dbReference type="GO" id="GO:0050660">
    <property type="term" value="F:flavin adenine dinucleotide binding"/>
    <property type="evidence" value="ECO:0007669"/>
    <property type="project" value="UniProtKB-UniRule"/>
</dbReference>
<dbReference type="GO" id="GO:0016645">
    <property type="term" value="F:oxidoreductase activity, acting on the CH-NH group of donors"/>
    <property type="evidence" value="ECO:0007669"/>
    <property type="project" value="InterPro"/>
</dbReference>
<dbReference type="GO" id="GO:0004808">
    <property type="term" value="F:tRNA (5-methylaminomethyl-2-thiouridylate)(34)-methyltransferase activity"/>
    <property type="evidence" value="ECO:0007669"/>
    <property type="project" value="UniProtKB-EC"/>
</dbReference>
<dbReference type="GO" id="GO:0032259">
    <property type="term" value="P:methylation"/>
    <property type="evidence" value="ECO:0007669"/>
    <property type="project" value="UniProtKB-KW"/>
</dbReference>
<dbReference type="GO" id="GO:0002098">
    <property type="term" value="P:tRNA wobble uridine modification"/>
    <property type="evidence" value="ECO:0007669"/>
    <property type="project" value="TreeGrafter"/>
</dbReference>
<dbReference type="FunFam" id="3.40.50.150:FF:000107">
    <property type="entry name" value="tRNA 5-methylaminomethyl-2-thiouridine biosynthesis bifunctional protein MnmC"/>
    <property type="match status" value="1"/>
</dbReference>
<dbReference type="Gene3D" id="3.30.9.10">
    <property type="entry name" value="D-Amino Acid Oxidase, subunit A, domain 2"/>
    <property type="match status" value="1"/>
</dbReference>
<dbReference type="Gene3D" id="3.50.50.60">
    <property type="entry name" value="FAD/NAD(P)-binding domain"/>
    <property type="match status" value="1"/>
</dbReference>
<dbReference type="Gene3D" id="3.40.50.150">
    <property type="entry name" value="Vaccinia Virus protein VP39"/>
    <property type="match status" value="1"/>
</dbReference>
<dbReference type="HAMAP" id="MF_01102">
    <property type="entry name" value="MnmC"/>
    <property type="match status" value="1"/>
</dbReference>
<dbReference type="InterPro" id="IPR006076">
    <property type="entry name" value="FAD-dep_OxRdtase"/>
</dbReference>
<dbReference type="InterPro" id="IPR036188">
    <property type="entry name" value="FAD/NAD-bd_sf"/>
</dbReference>
<dbReference type="InterPro" id="IPR008471">
    <property type="entry name" value="MnmC-like_methylTransf"/>
</dbReference>
<dbReference type="InterPro" id="IPR029063">
    <property type="entry name" value="SAM-dependent_MTases_sf"/>
</dbReference>
<dbReference type="InterPro" id="IPR023032">
    <property type="entry name" value="tRNA_MAMT_biosynth_bifunc_MnmC"/>
</dbReference>
<dbReference type="InterPro" id="IPR047785">
    <property type="entry name" value="tRNA_MNMC2"/>
</dbReference>
<dbReference type="InterPro" id="IPR017610">
    <property type="entry name" value="tRNA_S-uridine_synth_MnmC_C"/>
</dbReference>
<dbReference type="NCBIfam" id="TIGR03197">
    <property type="entry name" value="MnmC_Cterm"/>
    <property type="match status" value="1"/>
</dbReference>
<dbReference type="NCBIfam" id="NF002480">
    <property type="entry name" value="PRK01747.1-1"/>
    <property type="match status" value="1"/>
</dbReference>
<dbReference type="NCBIfam" id="NF002481">
    <property type="entry name" value="PRK01747.1-2"/>
    <property type="match status" value="1"/>
</dbReference>
<dbReference type="NCBIfam" id="NF002482">
    <property type="entry name" value="PRK01747.1-3"/>
    <property type="match status" value="1"/>
</dbReference>
<dbReference type="NCBIfam" id="NF002484">
    <property type="entry name" value="PRK01747.1-5"/>
    <property type="match status" value="1"/>
</dbReference>
<dbReference type="NCBIfam" id="NF033855">
    <property type="entry name" value="tRNA_MNMC2"/>
    <property type="match status" value="1"/>
</dbReference>
<dbReference type="PANTHER" id="PTHR13847">
    <property type="entry name" value="SARCOSINE DEHYDROGENASE-RELATED"/>
    <property type="match status" value="1"/>
</dbReference>
<dbReference type="PANTHER" id="PTHR13847:SF283">
    <property type="entry name" value="TRNA 5-METHYLAMINOMETHYL-2-THIOURIDINE BIOSYNTHESIS BIFUNCTIONAL PROTEIN MNMC"/>
    <property type="match status" value="1"/>
</dbReference>
<dbReference type="Pfam" id="PF01266">
    <property type="entry name" value="DAO"/>
    <property type="match status" value="1"/>
</dbReference>
<dbReference type="Pfam" id="PF05430">
    <property type="entry name" value="Methyltransf_30"/>
    <property type="match status" value="1"/>
</dbReference>
<dbReference type="SUPFAM" id="SSF51905">
    <property type="entry name" value="FAD/NAD(P)-binding domain"/>
    <property type="match status" value="1"/>
</dbReference>
<dbReference type="SUPFAM" id="SSF53335">
    <property type="entry name" value="S-adenosyl-L-methionine-dependent methyltransferases"/>
    <property type="match status" value="1"/>
</dbReference>